<name>HIS8_MYCTO</name>
<accession>P9WML6</accession>
<accession>L0T9Y3</accession>
<accession>O06591</accession>
<accession>P0A678</accession>
<protein>
    <recommendedName>
        <fullName evidence="1">Histidinol-phosphate aminotransferase</fullName>
        <ecNumber evidence="1">2.6.1.9</ecNumber>
    </recommendedName>
    <alternativeName>
        <fullName evidence="1">Imidazole acetol-phosphate transaminase</fullName>
    </alternativeName>
</protein>
<comment type="catalytic activity">
    <reaction evidence="1">
        <text>L-histidinol phosphate + 2-oxoglutarate = 3-(imidazol-4-yl)-2-oxopropyl phosphate + L-glutamate</text>
        <dbReference type="Rhea" id="RHEA:23744"/>
        <dbReference type="ChEBI" id="CHEBI:16810"/>
        <dbReference type="ChEBI" id="CHEBI:29985"/>
        <dbReference type="ChEBI" id="CHEBI:57766"/>
        <dbReference type="ChEBI" id="CHEBI:57980"/>
        <dbReference type="EC" id="2.6.1.9"/>
    </reaction>
</comment>
<comment type="cofactor">
    <cofactor evidence="1">
        <name>pyridoxal 5'-phosphate</name>
        <dbReference type="ChEBI" id="CHEBI:597326"/>
    </cofactor>
</comment>
<comment type="pathway">
    <text evidence="1">Amino-acid biosynthesis; L-histidine biosynthesis; L-histidine from 5-phospho-alpha-D-ribose 1-diphosphate: step 7/9.</text>
</comment>
<comment type="subunit">
    <text evidence="1">Homodimer.</text>
</comment>
<comment type="similarity">
    <text evidence="1">Belongs to the class-II pyridoxal-phosphate-dependent aminotransferase family. Histidinol-phosphate aminotransferase subfamily.</text>
</comment>
<feature type="chain" id="PRO_0000427282" description="Histidinol-phosphate aminotransferase">
    <location>
        <begin position="1"/>
        <end position="380"/>
    </location>
</feature>
<feature type="modified residue" description="N6-(pyridoxal phosphate)lysine" evidence="1">
    <location>
        <position position="232"/>
    </location>
</feature>
<dbReference type="EC" id="2.6.1.9" evidence="1"/>
<dbReference type="EMBL" id="AE000516">
    <property type="protein sequence ID" value="AAK45904.1"/>
    <property type="molecule type" value="Genomic_DNA"/>
</dbReference>
<dbReference type="PIR" id="B70544">
    <property type="entry name" value="B70544"/>
</dbReference>
<dbReference type="RefSeq" id="WP_003407947.1">
    <property type="nucleotide sequence ID" value="NZ_KK341227.1"/>
</dbReference>
<dbReference type="SMR" id="P9WML6"/>
<dbReference type="KEGG" id="mtc:MT1636"/>
<dbReference type="PATRIC" id="fig|83331.31.peg.1758"/>
<dbReference type="HOGENOM" id="CLU_017584_3_1_11"/>
<dbReference type="UniPathway" id="UPA00031">
    <property type="reaction ID" value="UER00012"/>
</dbReference>
<dbReference type="Proteomes" id="UP000001020">
    <property type="component" value="Chromosome"/>
</dbReference>
<dbReference type="GO" id="GO:0004400">
    <property type="term" value="F:histidinol-phosphate transaminase activity"/>
    <property type="evidence" value="ECO:0007669"/>
    <property type="project" value="UniProtKB-UniRule"/>
</dbReference>
<dbReference type="GO" id="GO:0030170">
    <property type="term" value="F:pyridoxal phosphate binding"/>
    <property type="evidence" value="ECO:0007669"/>
    <property type="project" value="InterPro"/>
</dbReference>
<dbReference type="GO" id="GO:0000105">
    <property type="term" value="P:L-histidine biosynthetic process"/>
    <property type="evidence" value="ECO:0007669"/>
    <property type="project" value="UniProtKB-UniRule"/>
</dbReference>
<dbReference type="CDD" id="cd00609">
    <property type="entry name" value="AAT_like"/>
    <property type="match status" value="1"/>
</dbReference>
<dbReference type="FunFam" id="3.40.640.10:FF:000138">
    <property type="entry name" value="Histidinol-phosphate aminotransferase"/>
    <property type="match status" value="1"/>
</dbReference>
<dbReference type="Gene3D" id="3.90.1150.10">
    <property type="entry name" value="Aspartate Aminotransferase, domain 1"/>
    <property type="match status" value="1"/>
</dbReference>
<dbReference type="Gene3D" id="3.40.640.10">
    <property type="entry name" value="Type I PLP-dependent aspartate aminotransferase-like (Major domain)"/>
    <property type="match status" value="1"/>
</dbReference>
<dbReference type="HAMAP" id="MF_01023">
    <property type="entry name" value="HisC_aminotrans_2"/>
    <property type="match status" value="1"/>
</dbReference>
<dbReference type="InterPro" id="IPR001917">
    <property type="entry name" value="Aminotrans_II_pyridoxalP_BS"/>
</dbReference>
<dbReference type="InterPro" id="IPR004839">
    <property type="entry name" value="Aminotransferase_I/II_large"/>
</dbReference>
<dbReference type="InterPro" id="IPR005861">
    <property type="entry name" value="HisP_aminotrans"/>
</dbReference>
<dbReference type="InterPro" id="IPR015424">
    <property type="entry name" value="PyrdxlP-dep_Trfase"/>
</dbReference>
<dbReference type="InterPro" id="IPR015421">
    <property type="entry name" value="PyrdxlP-dep_Trfase_major"/>
</dbReference>
<dbReference type="InterPro" id="IPR015422">
    <property type="entry name" value="PyrdxlP-dep_Trfase_small"/>
</dbReference>
<dbReference type="NCBIfam" id="TIGR01141">
    <property type="entry name" value="hisC"/>
    <property type="match status" value="1"/>
</dbReference>
<dbReference type="NCBIfam" id="NF002877">
    <property type="entry name" value="PRK03317.1"/>
    <property type="match status" value="1"/>
</dbReference>
<dbReference type="PANTHER" id="PTHR42885:SF2">
    <property type="entry name" value="HISTIDINOL-PHOSPHATE AMINOTRANSFERASE"/>
    <property type="match status" value="1"/>
</dbReference>
<dbReference type="PANTHER" id="PTHR42885">
    <property type="entry name" value="HISTIDINOL-PHOSPHATE AMINOTRANSFERASE-RELATED"/>
    <property type="match status" value="1"/>
</dbReference>
<dbReference type="Pfam" id="PF00155">
    <property type="entry name" value="Aminotran_1_2"/>
    <property type="match status" value="1"/>
</dbReference>
<dbReference type="SUPFAM" id="SSF53383">
    <property type="entry name" value="PLP-dependent transferases"/>
    <property type="match status" value="1"/>
</dbReference>
<dbReference type="PROSITE" id="PS00599">
    <property type="entry name" value="AA_TRANSFER_CLASS_2"/>
    <property type="match status" value="1"/>
</dbReference>
<evidence type="ECO:0000255" key="1">
    <source>
        <dbReference type="HAMAP-Rule" id="MF_01023"/>
    </source>
</evidence>
<proteinExistence type="inferred from homology"/>
<organism>
    <name type="scientific">Mycobacterium tuberculosis (strain CDC 1551 / Oshkosh)</name>
    <dbReference type="NCBI Taxonomy" id="83331"/>
    <lineage>
        <taxon>Bacteria</taxon>
        <taxon>Bacillati</taxon>
        <taxon>Actinomycetota</taxon>
        <taxon>Actinomycetes</taxon>
        <taxon>Mycobacteriales</taxon>
        <taxon>Mycobacteriaceae</taxon>
        <taxon>Mycobacterium</taxon>
        <taxon>Mycobacterium tuberculosis complex</taxon>
    </lineage>
</organism>
<keyword id="KW-0028">Amino-acid biosynthesis</keyword>
<keyword id="KW-0032">Aminotransferase</keyword>
<keyword id="KW-0368">Histidine biosynthesis</keyword>
<keyword id="KW-0663">Pyridoxal phosphate</keyword>
<keyword id="KW-1185">Reference proteome</keyword>
<keyword id="KW-0808">Transferase</keyword>
<sequence length="380" mass="40581">MTRSGHPVTLDDLPLRADLRGKAPYGAPQLAVPVRLNTNENPHPPTRALVDDVVRSVREAAIDLHRYPDRDAVALRADLAGYLTAQTGIQLGVENIWAANGSNEILQQLLQAFGGPGRSAIGFVPSYSMHPIISDGTHTEWIEASRANDFGLDVDVAVAAVVDRKPDVVFIASPNNPSGQSVSLPDLCKLLDVAPGIAIVDEAYGEFSSQPSAVSLVEEYPSKLVVTRTMSKAFAFAGGRLGYLIATPAVIDAMLLVRLPYHLSSVTQAAARAALRHSDDTLSSVAALIAERERVTTSLNDMGFRVIPSDANFVLFGEFADAPAAWRRYLEAGILIRDVGIPGYLRATTGLAEENDAFLRASARIATDLVPVTRSPVGAP</sequence>
<reference key="1">
    <citation type="journal article" date="2002" name="J. Bacteriol.">
        <title>Whole-genome comparison of Mycobacterium tuberculosis clinical and laboratory strains.</title>
        <authorList>
            <person name="Fleischmann R.D."/>
            <person name="Alland D."/>
            <person name="Eisen J.A."/>
            <person name="Carpenter L."/>
            <person name="White O."/>
            <person name="Peterson J.D."/>
            <person name="DeBoy R.T."/>
            <person name="Dodson R.J."/>
            <person name="Gwinn M.L."/>
            <person name="Haft D.H."/>
            <person name="Hickey E.K."/>
            <person name="Kolonay J.F."/>
            <person name="Nelson W.C."/>
            <person name="Umayam L.A."/>
            <person name="Ermolaeva M.D."/>
            <person name="Salzberg S.L."/>
            <person name="Delcher A."/>
            <person name="Utterback T.R."/>
            <person name="Weidman J.F."/>
            <person name="Khouri H.M."/>
            <person name="Gill J."/>
            <person name="Mikula A."/>
            <person name="Bishai W."/>
            <person name="Jacobs W.R. Jr."/>
            <person name="Venter J.C."/>
            <person name="Fraser C.M."/>
        </authorList>
    </citation>
    <scope>NUCLEOTIDE SEQUENCE [LARGE SCALE GENOMIC DNA]</scope>
    <source>
        <strain>CDC 1551 / Oshkosh</strain>
    </source>
</reference>
<gene>
    <name evidence="1" type="primary">hisC</name>
    <name type="synonym">hisC1</name>
    <name type="ordered locus">MT1636</name>
</gene>